<feature type="chain" id="PRO_0000339600" description="ATP synthase subunit beta 1">
    <location>
        <begin position="1"/>
        <end position="467"/>
    </location>
</feature>
<feature type="binding site" evidence="1">
    <location>
        <begin position="150"/>
        <end position="157"/>
    </location>
    <ligand>
        <name>ATP</name>
        <dbReference type="ChEBI" id="CHEBI:30616"/>
    </ligand>
</feature>
<organism>
    <name type="scientific">Vibrio campbellii (strain ATCC BAA-1116)</name>
    <dbReference type="NCBI Taxonomy" id="2902295"/>
    <lineage>
        <taxon>Bacteria</taxon>
        <taxon>Pseudomonadati</taxon>
        <taxon>Pseudomonadota</taxon>
        <taxon>Gammaproteobacteria</taxon>
        <taxon>Vibrionales</taxon>
        <taxon>Vibrionaceae</taxon>
        <taxon>Vibrio</taxon>
    </lineage>
</organism>
<evidence type="ECO:0000255" key="1">
    <source>
        <dbReference type="HAMAP-Rule" id="MF_01347"/>
    </source>
</evidence>
<accession>A7N0Y1</accession>
<dbReference type="EC" id="7.1.2.2" evidence="1"/>
<dbReference type="EMBL" id="CP000789">
    <property type="protein sequence ID" value="ABU69436.1"/>
    <property type="molecule type" value="Genomic_DNA"/>
</dbReference>
<dbReference type="SMR" id="A7N0Y1"/>
<dbReference type="KEGG" id="vha:VIBHAR_00421"/>
<dbReference type="PATRIC" id="fig|338187.25.peg.2169"/>
<dbReference type="Proteomes" id="UP000008152">
    <property type="component" value="Chromosome I"/>
</dbReference>
<dbReference type="GO" id="GO:0005886">
    <property type="term" value="C:plasma membrane"/>
    <property type="evidence" value="ECO:0007669"/>
    <property type="project" value="UniProtKB-SubCell"/>
</dbReference>
<dbReference type="GO" id="GO:0045259">
    <property type="term" value="C:proton-transporting ATP synthase complex"/>
    <property type="evidence" value="ECO:0007669"/>
    <property type="project" value="UniProtKB-KW"/>
</dbReference>
<dbReference type="GO" id="GO:0005524">
    <property type="term" value="F:ATP binding"/>
    <property type="evidence" value="ECO:0007669"/>
    <property type="project" value="UniProtKB-UniRule"/>
</dbReference>
<dbReference type="GO" id="GO:0016887">
    <property type="term" value="F:ATP hydrolysis activity"/>
    <property type="evidence" value="ECO:0007669"/>
    <property type="project" value="InterPro"/>
</dbReference>
<dbReference type="GO" id="GO:0046933">
    <property type="term" value="F:proton-transporting ATP synthase activity, rotational mechanism"/>
    <property type="evidence" value="ECO:0007669"/>
    <property type="project" value="UniProtKB-UniRule"/>
</dbReference>
<dbReference type="CDD" id="cd18110">
    <property type="entry name" value="ATP-synt_F1_beta_C"/>
    <property type="match status" value="1"/>
</dbReference>
<dbReference type="CDD" id="cd18115">
    <property type="entry name" value="ATP-synt_F1_beta_N"/>
    <property type="match status" value="1"/>
</dbReference>
<dbReference type="CDD" id="cd01133">
    <property type="entry name" value="F1-ATPase_beta_CD"/>
    <property type="match status" value="1"/>
</dbReference>
<dbReference type="FunFam" id="1.10.1140.10:FF:000001">
    <property type="entry name" value="ATP synthase subunit beta"/>
    <property type="match status" value="1"/>
</dbReference>
<dbReference type="FunFam" id="2.40.10.170:FF:000003">
    <property type="entry name" value="ATP synthase subunit beta"/>
    <property type="match status" value="1"/>
</dbReference>
<dbReference type="FunFam" id="3.40.50.300:FF:000004">
    <property type="entry name" value="ATP synthase subunit beta"/>
    <property type="match status" value="1"/>
</dbReference>
<dbReference type="Gene3D" id="2.40.10.170">
    <property type="match status" value="1"/>
</dbReference>
<dbReference type="Gene3D" id="1.10.1140.10">
    <property type="entry name" value="Bovine Mitochondrial F1-atpase, Atp Synthase Beta Chain, Chain D, domain 3"/>
    <property type="match status" value="1"/>
</dbReference>
<dbReference type="Gene3D" id="3.40.50.300">
    <property type="entry name" value="P-loop containing nucleotide triphosphate hydrolases"/>
    <property type="match status" value="1"/>
</dbReference>
<dbReference type="HAMAP" id="MF_01347">
    <property type="entry name" value="ATP_synth_beta_bact"/>
    <property type="match status" value="1"/>
</dbReference>
<dbReference type="InterPro" id="IPR003593">
    <property type="entry name" value="AAA+_ATPase"/>
</dbReference>
<dbReference type="InterPro" id="IPR055190">
    <property type="entry name" value="ATP-synt_VA_C"/>
</dbReference>
<dbReference type="InterPro" id="IPR005722">
    <property type="entry name" value="ATP_synth_F1_bsu"/>
</dbReference>
<dbReference type="InterPro" id="IPR020003">
    <property type="entry name" value="ATPase_a/bsu_AS"/>
</dbReference>
<dbReference type="InterPro" id="IPR050053">
    <property type="entry name" value="ATPase_alpha/beta_chains"/>
</dbReference>
<dbReference type="InterPro" id="IPR004100">
    <property type="entry name" value="ATPase_F1/V1/A1_a/bsu_N"/>
</dbReference>
<dbReference type="InterPro" id="IPR036121">
    <property type="entry name" value="ATPase_F1/V1/A1_a/bsu_N_sf"/>
</dbReference>
<dbReference type="InterPro" id="IPR000194">
    <property type="entry name" value="ATPase_F1/V1/A1_a/bsu_nucl-bd"/>
</dbReference>
<dbReference type="InterPro" id="IPR024034">
    <property type="entry name" value="ATPase_F1/V1_b/a_C"/>
</dbReference>
<dbReference type="InterPro" id="IPR027417">
    <property type="entry name" value="P-loop_NTPase"/>
</dbReference>
<dbReference type="NCBIfam" id="TIGR01039">
    <property type="entry name" value="atpD"/>
    <property type="match status" value="1"/>
</dbReference>
<dbReference type="PANTHER" id="PTHR15184">
    <property type="entry name" value="ATP SYNTHASE"/>
    <property type="match status" value="1"/>
</dbReference>
<dbReference type="PANTHER" id="PTHR15184:SF71">
    <property type="entry name" value="ATP SYNTHASE SUBUNIT BETA, MITOCHONDRIAL"/>
    <property type="match status" value="1"/>
</dbReference>
<dbReference type="Pfam" id="PF00006">
    <property type="entry name" value="ATP-synt_ab"/>
    <property type="match status" value="1"/>
</dbReference>
<dbReference type="Pfam" id="PF02874">
    <property type="entry name" value="ATP-synt_ab_N"/>
    <property type="match status" value="1"/>
</dbReference>
<dbReference type="Pfam" id="PF22919">
    <property type="entry name" value="ATP-synt_VA_C"/>
    <property type="match status" value="1"/>
</dbReference>
<dbReference type="SMART" id="SM00382">
    <property type="entry name" value="AAA"/>
    <property type="match status" value="1"/>
</dbReference>
<dbReference type="SUPFAM" id="SSF47917">
    <property type="entry name" value="C-terminal domain of alpha and beta subunits of F1 ATP synthase"/>
    <property type="match status" value="1"/>
</dbReference>
<dbReference type="SUPFAM" id="SSF50615">
    <property type="entry name" value="N-terminal domain of alpha and beta subunits of F1 ATP synthase"/>
    <property type="match status" value="1"/>
</dbReference>
<dbReference type="SUPFAM" id="SSF52540">
    <property type="entry name" value="P-loop containing nucleoside triphosphate hydrolases"/>
    <property type="match status" value="1"/>
</dbReference>
<dbReference type="PROSITE" id="PS00152">
    <property type="entry name" value="ATPASE_ALPHA_BETA"/>
    <property type="match status" value="1"/>
</dbReference>
<gene>
    <name evidence="1" type="primary">atpD1</name>
    <name type="ordered locus">VIBHAR_00421</name>
</gene>
<keyword id="KW-0066">ATP synthesis</keyword>
<keyword id="KW-0067">ATP-binding</keyword>
<keyword id="KW-0997">Cell inner membrane</keyword>
<keyword id="KW-1003">Cell membrane</keyword>
<keyword id="KW-0139">CF(1)</keyword>
<keyword id="KW-0375">Hydrogen ion transport</keyword>
<keyword id="KW-0406">Ion transport</keyword>
<keyword id="KW-0472">Membrane</keyword>
<keyword id="KW-0547">Nucleotide-binding</keyword>
<keyword id="KW-1278">Translocase</keyword>
<keyword id="KW-0813">Transport</keyword>
<comment type="function">
    <text evidence="1">Produces ATP from ADP in the presence of a proton gradient across the membrane. The catalytic sites are hosted primarily by the beta subunits.</text>
</comment>
<comment type="catalytic activity">
    <reaction evidence="1">
        <text>ATP + H2O + 4 H(+)(in) = ADP + phosphate + 5 H(+)(out)</text>
        <dbReference type="Rhea" id="RHEA:57720"/>
        <dbReference type="ChEBI" id="CHEBI:15377"/>
        <dbReference type="ChEBI" id="CHEBI:15378"/>
        <dbReference type="ChEBI" id="CHEBI:30616"/>
        <dbReference type="ChEBI" id="CHEBI:43474"/>
        <dbReference type="ChEBI" id="CHEBI:456216"/>
        <dbReference type="EC" id="7.1.2.2"/>
    </reaction>
</comment>
<comment type="subunit">
    <text evidence="1">F-type ATPases have 2 components, CF(1) - the catalytic core - and CF(0) - the membrane proton channel. CF(1) has five subunits: alpha(3), beta(3), gamma(1), delta(1), epsilon(1). CF(0) has three main subunits: a(1), b(2) and c(9-12). The alpha and beta chains form an alternating ring which encloses part of the gamma chain. CF(1) is attached to CF(0) by a central stalk formed by the gamma and epsilon chains, while a peripheral stalk is formed by the delta and b chains.</text>
</comment>
<comment type="subcellular location">
    <subcellularLocation>
        <location evidence="1">Cell inner membrane</location>
        <topology evidence="1">Peripheral membrane protein</topology>
    </subcellularLocation>
</comment>
<comment type="similarity">
    <text evidence="1">Belongs to the ATPase alpha/beta chains family.</text>
</comment>
<proteinExistence type="inferred from homology"/>
<reference key="1">
    <citation type="submission" date="2007-08" db="EMBL/GenBank/DDBJ databases">
        <authorList>
            <consortium name="The Vibrio harveyi Genome Sequencing Project"/>
            <person name="Bassler B."/>
            <person name="Clifton S.W."/>
            <person name="Fulton L."/>
            <person name="Delehaunty K."/>
            <person name="Fronick C."/>
            <person name="Harrison M."/>
            <person name="Markivic C."/>
            <person name="Fulton R."/>
            <person name="Tin-Wollam A.-M."/>
            <person name="Shah N."/>
            <person name="Pepin K."/>
            <person name="Nash W."/>
            <person name="Thiruvilangam P."/>
            <person name="Bhonagiri V."/>
            <person name="Waters C."/>
            <person name="Tu K.C."/>
            <person name="Irgon J."/>
            <person name="Wilson R.K."/>
        </authorList>
    </citation>
    <scope>NUCLEOTIDE SEQUENCE [LARGE SCALE GENOMIC DNA]</scope>
    <source>
        <strain>ATCC BAA-1116 / BB120</strain>
    </source>
</reference>
<name>ATPB1_VIBC1</name>
<protein>
    <recommendedName>
        <fullName evidence="1">ATP synthase subunit beta 1</fullName>
        <ecNumber evidence="1">7.1.2.2</ecNumber>
    </recommendedName>
    <alternativeName>
        <fullName evidence="1">ATP synthase F1 sector subunit beta 1</fullName>
    </alternativeName>
    <alternativeName>
        <fullName evidence="1">F-ATPase subunit beta 1</fullName>
    </alternativeName>
</protein>
<sequence>MATGKIVQIIGAVVDVEFPQSEVPSVYDALNVTDSKERLVLEVQQQLGGGVVRCIVMGSSDGLRRGVEVVNTGAPISVPVGTKTLGRIMNVLGDAIDERGEIGAEEVYSIHREAPSYEEQSNETALLETGVKVIDLVCPFAKGGKIGLFGGAGVGKTVNMMELINNIALQHSGLSVFAGVGERTREGNDFYYEMQEAGVVNVENPEESKVAMVYGQMNEPPGNRLRVALTGLTMAERFRDEGRDVLLFVDNIYRYTLAGTEVSALLGRMPSAVGYQPTLAEEMGVLQERITSTKQGSITSVQAVYVPADDLTDPSPATTFAHLDATVVLNRNIAAMGLYPAIDPLDSTSRQLDPLVVGQDHYDTARGVQQTLQRYKELKDIIAILGMDELSEEDKQVVSRARKIERFLTQPYHVAEVFTGDPGVYVPLKETLRGFKGLLAGEYDDIPEQAFMYCGTIDDAIENAKKL</sequence>